<accession>A8AP08</accession>
<reference key="1">
    <citation type="submission" date="2007-08" db="EMBL/GenBank/DDBJ databases">
        <authorList>
            <consortium name="The Citrobacter koseri Genome Sequencing Project"/>
            <person name="McClelland M."/>
            <person name="Sanderson E.K."/>
            <person name="Porwollik S."/>
            <person name="Spieth J."/>
            <person name="Clifton W.S."/>
            <person name="Latreille P."/>
            <person name="Courtney L."/>
            <person name="Wang C."/>
            <person name="Pepin K."/>
            <person name="Bhonagiri V."/>
            <person name="Nash W."/>
            <person name="Johnson M."/>
            <person name="Thiruvilangam P."/>
            <person name="Wilson R."/>
        </authorList>
    </citation>
    <scope>NUCLEOTIDE SEQUENCE [LARGE SCALE GENOMIC DNA]</scope>
    <source>
        <strain>ATCC BAA-895 / CDC 4225-83 / SGSC4696</strain>
    </source>
</reference>
<feature type="chain" id="PRO_1000065877" description="Flap endonuclease Xni">
    <location>
        <begin position="1"/>
        <end position="251"/>
    </location>
</feature>
<feature type="domain" description="5'-3' exonuclease" evidence="1">
    <location>
        <begin position="160"/>
        <end position="249"/>
    </location>
</feature>
<feature type="region of interest" description="Interaction with DNA" evidence="1">
    <location>
        <begin position="184"/>
        <end position="189"/>
    </location>
</feature>
<feature type="binding site" evidence="1">
    <location>
        <position position="104"/>
    </location>
    <ligand>
        <name>Mg(2+)</name>
        <dbReference type="ChEBI" id="CHEBI:18420"/>
    </ligand>
</feature>
<feature type="binding site" evidence="1">
    <location>
        <position position="171"/>
    </location>
    <ligand>
        <name>K(+)</name>
        <dbReference type="ChEBI" id="CHEBI:29103"/>
    </ligand>
</feature>
<feature type="binding site" evidence="1">
    <location>
        <position position="172"/>
    </location>
    <ligand>
        <name>K(+)</name>
        <dbReference type="ChEBI" id="CHEBI:29103"/>
    </ligand>
</feature>
<feature type="binding site" evidence="1">
    <location>
        <position position="180"/>
    </location>
    <ligand>
        <name>K(+)</name>
        <dbReference type="ChEBI" id="CHEBI:29103"/>
    </ligand>
</feature>
<feature type="binding site" evidence="1">
    <location>
        <position position="182"/>
    </location>
    <ligand>
        <name>K(+)</name>
        <dbReference type="ChEBI" id="CHEBI:29103"/>
    </ligand>
</feature>
<feature type="binding site" evidence="1">
    <location>
        <position position="185"/>
    </location>
    <ligand>
        <name>K(+)</name>
        <dbReference type="ChEBI" id="CHEBI:29103"/>
    </ligand>
</feature>
<dbReference type="EC" id="3.1.-.-" evidence="1"/>
<dbReference type="EMBL" id="CP000822">
    <property type="protein sequence ID" value="ABV15221.1"/>
    <property type="molecule type" value="Genomic_DNA"/>
</dbReference>
<dbReference type="RefSeq" id="WP_012134910.1">
    <property type="nucleotide sequence ID" value="NC_009792.1"/>
</dbReference>
<dbReference type="SMR" id="A8AP08"/>
<dbReference type="STRING" id="290338.CKO_04156"/>
<dbReference type="GeneID" id="45137785"/>
<dbReference type="KEGG" id="cko:CKO_04156"/>
<dbReference type="HOGENOM" id="CLU_004675_1_2_6"/>
<dbReference type="OrthoDB" id="8070997at2"/>
<dbReference type="Proteomes" id="UP000008148">
    <property type="component" value="Chromosome"/>
</dbReference>
<dbReference type="GO" id="GO:0008409">
    <property type="term" value="F:5'-3' exonuclease activity"/>
    <property type="evidence" value="ECO:0007669"/>
    <property type="project" value="InterPro"/>
</dbReference>
<dbReference type="GO" id="GO:0017108">
    <property type="term" value="F:5'-flap endonuclease activity"/>
    <property type="evidence" value="ECO:0007669"/>
    <property type="project" value="UniProtKB-UniRule"/>
</dbReference>
<dbReference type="GO" id="GO:0003677">
    <property type="term" value="F:DNA binding"/>
    <property type="evidence" value="ECO:0007669"/>
    <property type="project" value="UniProtKB-UniRule"/>
</dbReference>
<dbReference type="GO" id="GO:0000287">
    <property type="term" value="F:magnesium ion binding"/>
    <property type="evidence" value="ECO:0007669"/>
    <property type="project" value="UniProtKB-UniRule"/>
</dbReference>
<dbReference type="GO" id="GO:0030955">
    <property type="term" value="F:potassium ion binding"/>
    <property type="evidence" value="ECO:0007669"/>
    <property type="project" value="UniProtKB-UniRule"/>
</dbReference>
<dbReference type="GO" id="GO:0033567">
    <property type="term" value="P:DNA replication, Okazaki fragment processing"/>
    <property type="evidence" value="ECO:0007669"/>
    <property type="project" value="UniProtKB-UniRule"/>
</dbReference>
<dbReference type="CDD" id="cd09898">
    <property type="entry name" value="H3TH_53EXO"/>
    <property type="match status" value="1"/>
</dbReference>
<dbReference type="CDD" id="cd09859">
    <property type="entry name" value="PIN_53EXO"/>
    <property type="match status" value="1"/>
</dbReference>
<dbReference type="FunFam" id="1.10.150.20:FF:000003">
    <property type="entry name" value="DNA polymerase I"/>
    <property type="match status" value="1"/>
</dbReference>
<dbReference type="FunFam" id="3.40.50.1010:FF:000011">
    <property type="entry name" value="Flap endonuclease Xni"/>
    <property type="match status" value="1"/>
</dbReference>
<dbReference type="Gene3D" id="1.10.150.20">
    <property type="entry name" value="5' to 3' exonuclease, C-terminal subdomain"/>
    <property type="match status" value="1"/>
</dbReference>
<dbReference type="Gene3D" id="3.40.50.1010">
    <property type="entry name" value="5'-nuclease"/>
    <property type="match status" value="1"/>
</dbReference>
<dbReference type="HAMAP" id="MF_01192">
    <property type="entry name" value="Xni"/>
    <property type="match status" value="1"/>
</dbReference>
<dbReference type="InterPro" id="IPR020046">
    <property type="entry name" value="5-3_exonucl_a-hlix_arch_N"/>
</dbReference>
<dbReference type="InterPro" id="IPR002421">
    <property type="entry name" value="5-3_exonuclease"/>
</dbReference>
<dbReference type="InterPro" id="IPR036279">
    <property type="entry name" value="5-3_exonuclease_C_sf"/>
</dbReference>
<dbReference type="InterPro" id="IPR020045">
    <property type="entry name" value="DNA_polI_H3TH"/>
</dbReference>
<dbReference type="InterPro" id="IPR038969">
    <property type="entry name" value="FEN"/>
</dbReference>
<dbReference type="InterPro" id="IPR008918">
    <property type="entry name" value="HhH2"/>
</dbReference>
<dbReference type="InterPro" id="IPR029060">
    <property type="entry name" value="PIN-like_dom_sf"/>
</dbReference>
<dbReference type="InterPro" id="IPR022895">
    <property type="entry name" value="Xni"/>
</dbReference>
<dbReference type="NCBIfam" id="NF007017">
    <property type="entry name" value="PRK09482.1"/>
    <property type="match status" value="1"/>
</dbReference>
<dbReference type="PANTHER" id="PTHR42646:SF2">
    <property type="entry name" value="5'-3' EXONUCLEASE FAMILY PROTEIN"/>
    <property type="match status" value="1"/>
</dbReference>
<dbReference type="PANTHER" id="PTHR42646">
    <property type="entry name" value="FLAP ENDONUCLEASE XNI"/>
    <property type="match status" value="1"/>
</dbReference>
<dbReference type="Pfam" id="PF01367">
    <property type="entry name" value="5_3_exonuc"/>
    <property type="match status" value="1"/>
</dbReference>
<dbReference type="Pfam" id="PF02739">
    <property type="entry name" value="5_3_exonuc_N"/>
    <property type="match status" value="1"/>
</dbReference>
<dbReference type="SMART" id="SM00475">
    <property type="entry name" value="53EXOc"/>
    <property type="match status" value="1"/>
</dbReference>
<dbReference type="SMART" id="SM00279">
    <property type="entry name" value="HhH2"/>
    <property type="match status" value="1"/>
</dbReference>
<dbReference type="SUPFAM" id="SSF47807">
    <property type="entry name" value="5' to 3' exonuclease, C-terminal subdomain"/>
    <property type="match status" value="1"/>
</dbReference>
<dbReference type="SUPFAM" id="SSF88723">
    <property type="entry name" value="PIN domain-like"/>
    <property type="match status" value="1"/>
</dbReference>
<proteinExistence type="inferred from homology"/>
<evidence type="ECO:0000255" key="1">
    <source>
        <dbReference type="HAMAP-Rule" id="MF_01192"/>
    </source>
</evidence>
<sequence length="251" mass="28043">MAVHLLIVDALNLIRRIHAVQGSPCAETCLHALEQLIVHSQPTHAVAVFDDDARNSGWRHQRLPDYKAGRPPMPDELHNEMPAIRAAFEQRGVQCWVSSGNEADDLAATLAVKVTQAGHQATIVSTDKGYCQLLSPTLRIRDYFQKRWLDAPFIEKEFGVLPQQLPDYWGLAGISSSKVPGVAGIGPKSATQLLVQFQTLEGIYAHLDEVAEKWCKKLEAHKEMAFLCRDIARLQTDLHIDGNLQQLRLTR</sequence>
<protein>
    <recommendedName>
        <fullName evidence="1">Flap endonuclease Xni</fullName>
        <shortName evidence="1">FEN</shortName>
        <ecNumber evidence="1">3.1.-.-</ecNumber>
    </recommendedName>
</protein>
<keyword id="KW-0238">DNA-binding</keyword>
<keyword id="KW-0255">Endonuclease</keyword>
<keyword id="KW-0378">Hydrolase</keyword>
<keyword id="KW-0460">Magnesium</keyword>
<keyword id="KW-0479">Metal-binding</keyword>
<keyword id="KW-0540">Nuclease</keyword>
<keyword id="KW-0630">Potassium</keyword>
<keyword id="KW-1185">Reference proteome</keyword>
<comment type="function">
    <text evidence="1">Has flap endonuclease activity. During DNA replication, flap endonucleases cleave the 5'-overhanging flap structure that is generated by displacement synthesis when DNA polymerase encounters the 5'-end of a downstream Okazaki fragment.</text>
</comment>
<comment type="cofactor">
    <cofactor evidence="1">
        <name>Mg(2+)</name>
        <dbReference type="ChEBI" id="CHEBI:18420"/>
    </cofactor>
    <text evidence="1">Binds 2 Mg(2+) per subunit. Only one magnesium ion has a direct interaction with the protein, the other interactions are indirect.</text>
</comment>
<comment type="cofactor">
    <cofactor evidence="1">
        <name>K(+)</name>
        <dbReference type="ChEBI" id="CHEBI:29103"/>
    </cofactor>
    <text evidence="1">Binds 1 K(+) per subunit. The potassium ion strongly increases the affinity for DNA.</text>
</comment>
<comment type="similarity">
    <text evidence="1">Belongs to the Xni family.</text>
</comment>
<gene>
    <name evidence="1" type="primary">xni</name>
    <name evidence="1" type="synonym">ygdG</name>
    <name type="ordered locus">CKO_04156</name>
</gene>
<organism>
    <name type="scientific">Citrobacter koseri (strain ATCC BAA-895 / CDC 4225-83 / SGSC4696)</name>
    <dbReference type="NCBI Taxonomy" id="290338"/>
    <lineage>
        <taxon>Bacteria</taxon>
        <taxon>Pseudomonadati</taxon>
        <taxon>Pseudomonadota</taxon>
        <taxon>Gammaproteobacteria</taxon>
        <taxon>Enterobacterales</taxon>
        <taxon>Enterobacteriaceae</taxon>
        <taxon>Citrobacter</taxon>
    </lineage>
</organism>
<name>XNI_CITK8</name>